<name>RS12_GLOVI</name>
<protein>
    <recommendedName>
        <fullName evidence="2">Small ribosomal subunit protein uS12</fullName>
    </recommendedName>
    <alternativeName>
        <fullName evidence="4">30S ribosomal protein S12</fullName>
    </alternativeName>
</protein>
<gene>
    <name evidence="2" type="primary">rpsL</name>
    <name evidence="2" type="synonym">rps12</name>
    <name type="ordered locus">glr3925</name>
</gene>
<proteinExistence type="inferred from homology"/>
<keyword id="KW-0488">Methylation</keyword>
<keyword id="KW-1185">Reference proteome</keyword>
<keyword id="KW-0687">Ribonucleoprotein</keyword>
<keyword id="KW-0689">Ribosomal protein</keyword>
<keyword id="KW-0694">RNA-binding</keyword>
<keyword id="KW-0699">rRNA-binding</keyword>
<keyword id="KW-0820">tRNA-binding</keyword>
<accession>Q7NEF4</accession>
<comment type="function">
    <text evidence="2">With S4 and S5 plays an important role in translational accuracy.</text>
</comment>
<comment type="function">
    <text evidence="2">Interacts with and stabilizes bases of the 16S rRNA that are involved in tRNA selection in the A site and with the mRNA backbone. Located at the interface of the 30S and 50S subunits, it traverses the body of the 30S subunit contacting proteins on the other side and probably holding the rRNA structure together. The combined cluster of proteins S8, S12 and S17 appears to hold together the shoulder and platform of the 30S subunit.</text>
</comment>
<comment type="subunit">
    <text evidence="2">Part of the 30S ribosomal subunit. Contacts proteins S8 and S17. May interact with IF1 in the 30S initiation complex.</text>
</comment>
<comment type="similarity">
    <text evidence="2">Belongs to the universal ribosomal protein uS12 family.</text>
</comment>
<dbReference type="EMBL" id="BA000045">
    <property type="protein sequence ID" value="BAC91866.1"/>
    <property type="molecule type" value="Genomic_DNA"/>
</dbReference>
<dbReference type="RefSeq" id="NP_926871.1">
    <property type="nucleotide sequence ID" value="NC_005125.1"/>
</dbReference>
<dbReference type="RefSeq" id="WP_011143913.1">
    <property type="nucleotide sequence ID" value="NC_005125.1"/>
</dbReference>
<dbReference type="SMR" id="Q7NEF4"/>
<dbReference type="FunCoup" id="Q7NEF4">
    <property type="interactions" value="302"/>
</dbReference>
<dbReference type="STRING" id="251221.gene:10761442"/>
<dbReference type="EnsemblBacteria" id="BAC91866">
    <property type="protein sequence ID" value="BAC91866"/>
    <property type="gene ID" value="BAC91866"/>
</dbReference>
<dbReference type="KEGG" id="gvi:glr3925"/>
<dbReference type="PATRIC" id="fig|251221.4.peg.3958"/>
<dbReference type="eggNOG" id="COG0048">
    <property type="taxonomic scope" value="Bacteria"/>
</dbReference>
<dbReference type="HOGENOM" id="CLU_104295_1_2_3"/>
<dbReference type="InParanoid" id="Q7NEF4"/>
<dbReference type="OrthoDB" id="9802366at2"/>
<dbReference type="PhylomeDB" id="Q7NEF4"/>
<dbReference type="Proteomes" id="UP000000557">
    <property type="component" value="Chromosome"/>
</dbReference>
<dbReference type="GO" id="GO:0005840">
    <property type="term" value="C:ribosome"/>
    <property type="evidence" value="ECO:0000318"/>
    <property type="project" value="GO_Central"/>
</dbReference>
<dbReference type="GO" id="GO:0015935">
    <property type="term" value="C:small ribosomal subunit"/>
    <property type="evidence" value="ECO:0007669"/>
    <property type="project" value="InterPro"/>
</dbReference>
<dbReference type="GO" id="GO:0019843">
    <property type="term" value="F:rRNA binding"/>
    <property type="evidence" value="ECO:0007669"/>
    <property type="project" value="UniProtKB-UniRule"/>
</dbReference>
<dbReference type="GO" id="GO:0003735">
    <property type="term" value="F:structural constituent of ribosome"/>
    <property type="evidence" value="ECO:0000318"/>
    <property type="project" value="GO_Central"/>
</dbReference>
<dbReference type="GO" id="GO:0000049">
    <property type="term" value="F:tRNA binding"/>
    <property type="evidence" value="ECO:0007669"/>
    <property type="project" value="UniProtKB-UniRule"/>
</dbReference>
<dbReference type="GO" id="GO:0006412">
    <property type="term" value="P:translation"/>
    <property type="evidence" value="ECO:0000318"/>
    <property type="project" value="GO_Central"/>
</dbReference>
<dbReference type="CDD" id="cd03368">
    <property type="entry name" value="Ribosomal_S12"/>
    <property type="match status" value="1"/>
</dbReference>
<dbReference type="FunFam" id="2.40.50.140:FF:000001">
    <property type="entry name" value="30S ribosomal protein S12"/>
    <property type="match status" value="1"/>
</dbReference>
<dbReference type="Gene3D" id="2.40.50.140">
    <property type="entry name" value="Nucleic acid-binding proteins"/>
    <property type="match status" value="1"/>
</dbReference>
<dbReference type="HAMAP" id="MF_00403_B">
    <property type="entry name" value="Ribosomal_uS12_B"/>
    <property type="match status" value="1"/>
</dbReference>
<dbReference type="InterPro" id="IPR012340">
    <property type="entry name" value="NA-bd_OB-fold"/>
</dbReference>
<dbReference type="InterPro" id="IPR006032">
    <property type="entry name" value="Ribosomal_uS12"/>
</dbReference>
<dbReference type="InterPro" id="IPR005679">
    <property type="entry name" value="Ribosomal_uS12_bac"/>
</dbReference>
<dbReference type="NCBIfam" id="TIGR00981">
    <property type="entry name" value="rpsL_bact"/>
    <property type="match status" value="1"/>
</dbReference>
<dbReference type="PANTHER" id="PTHR11652">
    <property type="entry name" value="30S RIBOSOMAL PROTEIN S12 FAMILY MEMBER"/>
    <property type="match status" value="1"/>
</dbReference>
<dbReference type="Pfam" id="PF00164">
    <property type="entry name" value="Ribosom_S12_S23"/>
    <property type="match status" value="1"/>
</dbReference>
<dbReference type="PIRSF" id="PIRSF002133">
    <property type="entry name" value="Ribosomal_S12/S23"/>
    <property type="match status" value="1"/>
</dbReference>
<dbReference type="PRINTS" id="PR01034">
    <property type="entry name" value="RIBOSOMALS12"/>
</dbReference>
<dbReference type="SUPFAM" id="SSF50249">
    <property type="entry name" value="Nucleic acid-binding proteins"/>
    <property type="match status" value="1"/>
</dbReference>
<dbReference type="PROSITE" id="PS00055">
    <property type="entry name" value="RIBOSOMAL_S12"/>
    <property type="match status" value="1"/>
</dbReference>
<organism>
    <name type="scientific">Gloeobacter violaceus (strain ATCC 29082 / PCC 7421)</name>
    <dbReference type="NCBI Taxonomy" id="251221"/>
    <lineage>
        <taxon>Bacteria</taxon>
        <taxon>Bacillati</taxon>
        <taxon>Cyanobacteriota</taxon>
        <taxon>Cyanophyceae</taxon>
        <taxon>Gloeobacterales</taxon>
        <taxon>Gloeobacteraceae</taxon>
        <taxon>Gloeobacter</taxon>
    </lineage>
</organism>
<reference key="1">
    <citation type="journal article" date="2003" name="DNA Res.">
        <title>Complete genome structure of Gloeobacter violaceus PCC 7421, a cyanobacterium that lacks thylakoids.</title>
        <authorList>
            <person name="Nakamura Y."/>
            <person name="Kaneko T."/>
            <person name="Sato S."/>
            <person name="Mimuro M."/>
            <person name="Miyashita H."/>
            <person name="Tsuchiya T."/>
            <person name="Sasamoto S."/>
            <person name="Watanabe A."/>
            <person name="Kawashima K."/>
            <person name="Kishida Y."/>
            <person name="Kiyokawa C."/>
            <person name="Kohara M."/>
            <person name="Matsumoto M."/>
            <person name="Matsuno A."/>
            <person name="Nakazaki N."/>
            <person name="Shimpo S."/>
            <person name="Takeuchi C."/>
            <person name="Yamada M."/>
            <person name="Tabata S."/>
        </authorList>
    </citation>
    <scope>NUCLEOTIDE SEQUENCE [LARGE SCALE GENOMIC DNA]</scope>
    <source>
        <strain>ATCC 29082 / PCC 7421</strain>
    </source>
</reference>
<feature type="chain" id="PRO_0000146229" description="Small ribosomal subunit protein uS12">
    <location>
        <begin position="1"/>
        <end position="135"/>
    </location>
</feature>
<feature type="region of interest" description="Disordered" evidence="3">
    <location>
        <begin position="103"/>
        <end position="135"/>
    </location>
</feature>
<feature type="compositionally biased region" description="Basic residues" evidence="3">
    <location>
        <begin position="111"/>
        <end position="123"/>
    </location>
</feature>
<feature type="compositionally biased region" description="Low complexity" evidence="3">
    <location>
        <begin position="124"/>
        <end position="135"/>
    </location>
</feature>
<feature type="modified residue" description="3-methylthioaspartic acid" evidence="1">
    <location>
        <position position="89"/>
    </location>
</feature>
<sequence>MPTIAQLIRRERGIAQRKTKSPALKACPQRRGVCTRVYTTTPKKPNSALRKVARVRLTSGFEVTAYIPGVGHNLQEHSVVMIRGGRVKDLPGVRYHIIRGTLDTAGVKNRMQSRSKYGTKRPKPGQAAAPAGKKR</sequence>
<evidence type="ECO:0000250" key="1"/>
<evidence type="ECO:0000255" key="2">
    <source>
        <dbReference type="HAMAP-Rule" id="MF_00403"/>
    </source>
</evidence>
<evidence type="ECO:0000256" key="3">
    <source>
        <dbReference type="SAM" id="MobiDB-lite"/>
    </source>
</evidence>
<evidence type="ECO:0000305" key="4"/>